<accession>A0QSD0</accession>
<accession>I7FY80</accession>
<evidence type="ECO:0000255" key="1">
    <source>
        <dbReference type="HAMAP-Rule" id="MF_00508"/>
    </source>
</evidence>
<evidence type="ECO:0000305" key="2"/>
<evidence type="ECO:0007829" key="3">
    <source>
        <dbReference type="PDB" id="5XYU"/>
    </source>
</evidence>
<feature type="chain" id="PRO_1000015060" description="Small ribosomal subunit protein uS10">
    <location>
        <begin position="1"/>
        <end position="101"/>
    </location>
</feature>
<feature type="strand" evidence="3">
    <location>
        <begin position="6"/>
        <end position="13"/>
    </location>
</feature>
<feature type="helix" evidence="3">
    <location>
        <begin position="15"/>
        <end position="32"/>
    </location>
</feature>
<feature type="strand" evidence="3">
    <location>
        <begin position="45"/>
        <end position="51"/>
    </location>
</feature>
<feature type="strand" evidence="3">
    <location>
        <begin position="63"/>
        <end position="72"/>
    </location>
</feature>
<feature type="helix" evidence="3">
    <location>
        <begin position="81"/>
        <end position="89"/>
    </location>
</feature>
<feature type="strand" evidence="3">
    <location>
        <begin position="97"/>
        <end position="101"/>
    </location>
</feature>
<gene>
    <name evidence="1" type="primary">rpsJ</name>
    <name type="ordered locus">MSMEG_1435</name>
    <name type="ordered locus">MSMEI_1399</name>
</gene>
<reference key="1">
    <citation type="submission" date="2006-10" db="EMBL/GenBank/DDBJ databases">
        <authorList>
            <person name="Fleischmann R.D."/>
            <person name="Dodson R.J."/>
            <person name="Haft D.H."/>
            <person name="Merkel J.S."/>
            <person name="Nelson W.C."/>
            <person name="Fraser C.M."/>
        </authorList>
    </citation>
    <scope>NUCLEOTIDE SEQUENCE [LARGE SCALE GENOMIC DNA]</scope>
    <source>
        <strain>ATCC 700084 / mc(2)155</strain>
    </source>
</reference>
<reference key="2">
    <citation type="journal article" date="2007" name="Genome Biol.">
        <title>Interrupted coding sequences in Mycobacterium smegmatis: authentic mutations or sequencing errors?</title>
        <authorList>
            <person name="Deshayes C."/>
            <person name="Perrodou E."/>
            <person name="Gallien S."/>
            <person name="Euphrasie D."/>
            <person name="Schaeffer C."/>
            <person name="Van-Dorsselaer A."/>
            <person name="Poch O."/>
            <person name="Lecompte O."/>
            <person name="Reyrat J.-M."/>
        </authorList>
    </citation>
    <scope>NUCLEOTIDE SEQUENCE [LARGE SCALE GENOMIC DNA]</scope>
    <source>
        <strain>ATCC 700084 / mc(2)155</strain>
    </source>
</reference>
<reference key="3">
    <citation type="journal article" date="2009" name="Genome Res.">
        <title>Ortho-proteogenomics: multiple proteomes investigation through orthology and a new MS-based protocol.</title>
        <authorList>
            <person name="Gallien S."/>
            <person name="Perrodou E."/>
            <person name="Carapito C."/>
            <person name="Deshayes C."/>
            <person name="Reyrat J.-M."/>
            <person name="Van Dorsselaer A."/>
            <person name="Poch O."/>
            <person name="Schaeffer C."/>
            <person name="Lecompte O."/>
        </authorList>
    </citation>
    <scope>NUCLEOTIDE SEQUENCE [LARGE SCALE GENOMIC DNA]</scope>
    <scope>IDENTIFICATION BY MASS SPECTROMETRY [LARGE SCALE ANALYSIS]</scope>
    <source>
        <strain>ATCC 700084 / mc(2)155</strain>
    </source>
</reference>
<organism>
    <name type="scientific">Mycolicibacterium smegmatis (strain ATCC 700084 / mc(2)155)</name>
    <name type="common">Mycobacterium smegmatis</name>
    <dbReference type="NCBI Taxonomy" id="246196"/>
    <lineage>
        <taxon>Bacteria</taxon>
        <taxon>Bacillati</taxon>
        <taxon>Actinomycetota</taxon>
        <taxon>Actinomycetes</taxon>
        <taxon>Mycobacteriales</taxon>
        <taxon>Mycobacteriaceae</taxon>
        <taxon>Mycolicibacterium</taxon>
    </lineage>
</organism>
<comment type="function">
    <text evidence="1">Involved in the binding of tRNA to the ribosomes.</text>
</comment>
<comment type="subunit">
    <text evidence="1">Part of the 30S ribosomal subunit.</text>
</comment>
<comment type="similarity">
    <text evidence="1">Belongs to the universal ribosomal protein uS10 family.</text>
</comment>
<sequence>MAGQKIRIRLKAYDHEAIDASARKIVETVTRTGASVVGPVPLPTEKNVYCVIRSPHKYKDSREHFEMRTHKRLIDILDPTPKTVDALMRIDLPASVDVNIQ</sequence>
<dbReference type="EMBL" id="CP000480">
    <property type="protein sequence ID" value="ABK75640.1"/>
    <property type="molecule type" value="Genomic_DNA"/>
</dbReference>
<dbReference type="EMBL" id="CP001663">
    <property type="protein sequence ID" value="AFP37872.1"/>
    <property type="molecule type" value="Genomic_DNA"/>
</dbReference>
<dbReference type="RefSeq" id="WP_003883485.1">
    <property type="nucleotide sequence ID" value="NZ_SIJM01000016.1"/>
</dbReference>
<dbReference type="RefSeq" id="YP_885818.1">
    <property type="nucleotide sequence ID" value="NC_008596.1"/>
</dbReference>
<dbReference type="PDB" id="5O5J">
    <property type="method" value="EM"/>
    <property type="resolution" value="3.45 A"/>
    <property type="chains" value="J=1-101"/>
</dbReference>
<dbReference type="PDB" id="5O61">
    <property type="method" value="EM"/>
    <property type="resolution" value="3.31 A"/>
    <property type="chains" value="BJ=1-101"/>
</dbReference>
<dbReference type="PDB" id="5XYU">
    <property type="method" value="EM"/>
    <property type="resolution" value="3.45 A"/>
    <property type="chains" value="J=1-101"/>
</dbReference>
<dbReference type="PDB" id="5ZEB">
    <property type="method" value="EM"/>
    <property type="resolution" value="3.40 A"/>
    <property type="chains" value="j=1-101"/>
</dbReference>
<dbReference type="PDB" id="5ZEP">
    <property type="method" value="EM"/>
    <property type="resolution" value="3.40 A"/>
    <property type="chains" value="j=1-101"/>
</dbReference>
<dbReference type="PDB" id="5ZEU">
    <property type="method" value="EM"/>
    <property type="resolution" value="3.70 A"/>
    <property type="chains" value="j=1-101"/>
</dbReference>
<dbReference type="PDB" id="6DZI">
    <property type="method" value="EM"/>
    <property type="resolution" value="3.46 A"/>
    <property type="chains" value="s=3-101"/>
</dbReference>
<dbReference type="PDB" id="6DZK">
    <property type="method" value="EM"/>
    <property type="resolution" value="3.60 A"/>
    <property type="chains" value="J=1-101"/>
</dbReference>
<dbReference type="PDB" id="8V9J">
    <property type="method" value="EM"/>
    <property type="resolution" value="3.10 A"/>
    <property type="chains" value="j=1-101"/>
</dbReference>
<dbReference type="PDB" id="8V9K">
    <property type="method" value="EM"/>
    <property type="resolution" value="3.10 A"/>
    <property type="chains" value="j=1-101"/>
</dbReference>
<dbReference type="PDB" id="8V9L">
    <property type="method" value="EM"/>
    <property type="resolution" value="3.00 A"/>
    <property type="chains" value="j=1-101"/>
</dbReference>
<dbReference type="PDB" id="8VIO">
    <property type="method" value="EM"/>
    <property type="resolution" value="3.26 A"/>
    <property type="chains" value="p=1-101"/>
</dbReference>
<dbReference type="PDB" id="8WHX">
    <property type="method" value="EM"/>
    <property type="resolution" value="2.80 A"/>
    <property type="chains" value="k=1-101"/>
</dbReference>
<dbReference type="PDB" id="8WI7">
    <property type="method" value="EM"/>
    <property type="resolution" value="3.50 A"/>
    <property type="chains" value="k=1-101"/>
</dbReference>
<dbReference type="PDB" id="8WI9">
    <property type="method" value="EM"/>
    <property type="resolution" value="3.50 A"/>
    <property type="chains" value="k=1-101"/>
</dbReference>
<dbReference type="PDB" id="8WIB">
    <property type="method" value="EM"/>
    <property type="resolution" value="3.50 A"/>
    <property type="chains" value="k=1-101"/>
</dbReference>
<dbReference type="PDB" id="8WID">
    <property type="method" value="EM"/>
    <property type="resolution" value="3.50 A"/>
    <property type="chains" value="k=1-101"/>
</dbReference>
<dbReference type="PDB" id="8WIF">
    <property type="method" value="EM"/>
    <property type="resolution" value="2.90 A"/>
    <property type="chains" value="k=1-101"/>
</dbReference>
<dbReference type="PDBsum" id="5O5J"/>
<dbReference type="PDBsum" id="5O61"/>
<dbReference type="PDBsum" id="5XYU"/>
<dbReference type="PDBsum" id="5ZEB"/>
<dbReference type="PDBsum" id="5ZEP"/>
<dbReference type="PDBsum" id="5ZEU"/>
<dbReference type="PDBsum" id="6DZI"/>
<dbReference type="PDBsum" id="6DZK"/>
<dbReference type="PDBsum" id="8V9J"/>
<dbReference type="PDBsum" id="8V9K"/>
<dbReference type="PDBsum" id="8V9L"/>
<dbReference type="PDBsum" id="8VIO"/>
<dbReference type="PDBsum" id="8WHX"/>
<dbReference type="PDBsum" id="8WI7"/>
<dbReference type="PDBsum" id="8WI9"/>
<dbReference type="PDBsum" id="8WIB"/>
<dbReference type="PDBsum" id="8WID"/>
<dbReference type="PDBsum" id="8WIF"/>
<dbReference type="EMDB" id="EMD-3748"/>
<dbReference type="EMDB" id="EMD-3751"/>
<dbReference type="EMDB" id="EMD-37551"/>
<dbReference type="EMDB" id="EMD-37559"/>
<dbReference type="EMDB" id="EMD-37561"/>
<dbReference type="EMDB" id="EMD-37562"/>
<dbReference type="EMDB" id="EMD-37564"/>
<dbReference type="EMDB" id="EMD-37565"/>
<dbReference type="EMDB" id="EMD-43074"/>
<dbReference type="EMDB" id="EMD-43075"/>
<dbReference type="EMDB" id="EMD-43076"/>
<dbReference type="EMDB" id="EMD-43267"/>
<dbReference type="EMDB" id="EMD-6790"/>
<dbReference type="EMDB" id="EMD-6920"/>
<dbReference type="EMDB" id="EMD-6921"/>
<dbReference type="EMDB" id="EMD-6923"/>
<dbReference type="EMDB" id="EMD-8932"/>
<dbReference type="EMDB" id="EMD-8934"/>
<dbReference type="SMR" id="A0QSD0"/>
<dbReference type="IntAct" id="A0QSD0">
    <property type="interactions" value="1"/>
</dbReference>
<dbReference type="STRING" id="246196.MSMEG_1435"/>
<dbReference type="PaxDb" id="246196-MSMEI_1399"/>
<dbReference type="GeneID" id="98800347"/>
<dbReference type="KEGG" id="msb:LJ00_07160"/>
<dbReference type="KEGG" id="msg:MSMEI_1399"/>
<dbReference type="KEGG" id="msm:MSMEG_1435"/>
<dbReference type="PATRIC" id="fig|246196.19.peg.1421"/>
<dbReference type="eggNOG" id="COG0051">
    <property type="taxonomic scope" value="Bacteria"/>
</dbReference>
<dbReference type="OrthoDB" id="9804464at2"/>
<dbReference type="PRO" id="PR:A0QSD0"/>
<dbReference type="Proteomes" id="UP000000757">
    <property type="component" value="Chromosome"/>
</dbReference>
<dbReference type="Proteomes" id="UP000006158">
    <property type="component" value="Chromosome"/>
</dbReference>
<dbReference type="GO" id="GO:1990904">
    <property type="term" value="C:ribonucleoprotein complex"/>
    <property type="evidence" value="ECO:0007669"/>
    <property type="project" value="UniProtKB-KW"/>
</dbReference>
<dbReference type="GO" id="GO:0005840">
    <property type="term" value="C:ribosome"/>
    <property type="evidence" value="ECO:0007669"/>
    <property type="project" value="UniProtKB-KW"/>
</dbReference>
<dbReference type="GO" id="GO:0003735">
    <property type="term" value="F:structural constituent of ribosome"/>
    <property type="evidence" value="ECO:0007669"/>
    <property type="project" value="InterPro"/>
</dbReference>
<dbReference type="GO" id="GO:0000049">
    <property type="term" value="F:tRNA binding"/>
    <property type="evidence" value="ECO:0007669"/>
    <property type="project" value="UniProtKB-UniRule"/>
</dbReference>
<dbReference type="GO" id="GO:0006412">
    <property type="term" value="P:translation"/>
    <property type="evidence" value="ECO:0007669"/>
    <property type="project" value="UniProtKB-UniRule"/>
</dbReference>
<dbReference type="FunFam" id="3.30.70.600:FF:000001">
    <property type="entry name" value="30S ribosomal protein S10"/>
    <property type="match status" value="1"/>
</dbReference>
<dbReference type="Gene3D" id="3.30.70.600">
    <property type="entry name" value="Ribosomal protein S10 domain"/>
    <property type="match status" value="1"/>
</dbReference>
<dbReference type="HAMAP" id="MF_00508">
    <property type="entry name" value="Ribosomal_uS10"/>
    <property type="match status" value="1"/>
</dbReference>
<dbReference type="InterPro" id="IPR001848">
    <property type="entry name" value="Ribosomal_uS10"/>
</dbReference>
<dbReference type="InterPro" id="IPR018268">
    <property type="entry name" value="Ribosomal_uS10_CS"/>
</dbReference>
<dbReference type="InterPro" id="IPR027486">
    <property type="entry name" value="Ribosomal_uS10_dom"/>
</dbReference>
<dbReference type="InterPro" id="IPR036838">
    <property type="entry name" value="Ribosomal_uS10_dom_sf"/>
</dbReference>
<dbReference type="NCBIfam" id="NF001861">
    <property type="entry name" value="PRK00596.1"/>
    <property type="match status" value="1"/>
</dbReference>
<dbReference type="NCBIfam" id="TIGR01049">
    <property type="entry name" value="rpsJ_bact"/>
    <property type="match status" value="1"/>
</dbReference>
<dbReference type="PANTHER" id="PTHR11700">
    <property type="entry name" value="30S RIBOSOMAL PROTEIN S10 FAMILY MEMBER"/>
    <property type="match status" value="1"/>
</dbReference>
<dbReference type="Pfam" id="PF00338">
    <property type="entry name" value="Ribosomal_S10"/>
    <property type="match status" value="1"/>
</dbReference>
<dbReference type="PRINTS" id="PR00971">
    <property type="entry name" value="RIBOSOMALS10"/>
</dbReference>
<dbReference type="SMART" id="SM01403">
    <property type="entry name" value="Ribosomal_S10"/>
    <property type="match status" value="1"/>
</dbReference>
<dbReference type="SUPFAM" id="SSF54999">
    <property type="entry name" value="Ribosomal protein S10"/>
    <property type="match status" value="1"/>
</dbReference>
<dbReference type="PROSITE" id="PS00361">
    <property type="entry name" value="RIBOSOMAL_S10"/>
    <property type="match status" value="1"/>
</dbReference>
<protein>
    <recommendedName>
        <fullName evidence="1">Small ribosomal subunit protein uS10</fullName>
    </recommendedName>
    <alternativeName>
        <fullName evidence="2">30S ribosomal protein S10</fullName>
    </alternativeName>
</protein>
<keyword id="KW-0002">3D-structure</keyword>
<keyword id="KW-1185">Reference proteome</keyword>
<keyword id="KW-0687">Ribonucleoprotein</keyword>
<keyword id="KW-0689">Ribosomal protein</keyword>
<name>RS10_MYCS2</name>
<proteinExistence type="evidence at protein level"/>